<gene>
    <name evidence="1" type="primary">fhs</name>
    <name type="ordered locus">BA_2107</name>
    <name type="ordered locus">GBAA_2107</name>
    <name type="ordered locus">BAS1959</name>
</gene>
<feature type="chain" id="PRO_0000199327" description="Formate--tetrahydrofolate ligase">
    <location>
        <begin position="1"/>
        <end position="562"/>
    </location>
</feature>
<feature type="binding site" evidence="1">
    <location>
        <begin position="71"/>
        <end position="78"/>
    </location>
    <ligand>
        <name>ATP</name>
        <dbReference type="ChEBI" id="CHEBI:30616"/>
    </ligand>
</feature>
<reference key="1">
    <citation type="journal article" date="2003" name="Nature">
        <title>The genome sequence of Bacillus anthracis Ames and comparison to closely related bacteria.</title>
        <authorList>
            <person name="Read T.D."/>
            <person name="Peterson S.N."/>
            <person name="Tourasse N.J."/>
            <person name="Baillie L.W."/>
            <person name="Paulsen I.T."/>
            <person name="Nelson K.E."/>
            <person name="Tettelin H."/>
            <person name="Fouts D.E."/>
            <person name="Eisen J.A."/>
            <person name="Gill S.R."/>
            <person name="Holtzapple E.K."/>
            <person name="Okstad O.A."/>
            <person name="Helgason E."/>
            <person name="Rilstone J."/>
            <person name="Wu M."/>
            <person name="Kolonay J.F."/>
            <person name="Beanan M.J."/>
            <person name="Dodson R.J."/>
            <person name="Brinkac L.M."/>
            <person name="Gwinn M.L."/>
            <person name="DeBoy R.T."/>
            <person name="Madpu R."/>
            <person name="Daugherty S.C."/>
            <person name="Durkin A.S."/>
            <person name="Haft D.H."/>
            <person name="Nelson W.C."/>
            <person name="Peterson J.D."/>
            <person name="Pop M."/>
            <person name="Khouri H.M."/>
            <person name="Radune D."/>
            <person name="Benton J.L."/>
            <person name="Mahamoud Y."/>
            <person name="Jiang L."/>
            <person name="Hance I.R."/>
            <person name="Weidman J.F."/>
            <person name="Berry K.J."/>
            <person name="Plaut R.D."/>
            <person name="Wolf A.M."/>
            <person name="Watkins K.L."/>
            <person name="Nierman W.C."/>
            <person name="Hazen A."/>
            <person name="Cline R.T."/>
            <person name="Redmond C."/>
            <person name="Thwaite J.E."/>
            <person name="White O."/>
            <person name="Salzberg S.L."/>
            <person name="Thomason B."/>
            <person name="Friedlander A.M."/>
            <person name="Koehler T.M."/>
            <person name="Hanna P.C."/>
            <person name="Kolstoe A.-B."/>
            <person name="Fraser C.M."/>
        </authorList>
    </citation>
    <scope>NUCLEOTIDE SEQUENCE [LARGE SCALE GENOMIC DNA]</scope>
    <source>
        <strain>Ames / isolate Porton</strain>
    </source>
</reference>
<reference key="2">
    <citation type="journal article" date="2009" name="J. Bacteriol.">
        <title>The complete genome sequence of Bacillus anthracis Ames 'Ancestor'.</title>
        <authorList>
            <person name="Ravel J."/>
            <person name="Jiang L."/>
            <person name="Stanley S.T."/>
            <person name="Wilson M.R."/>
            <person name="Decker R.S."/>
            <person name="Read T.D."/>
            <person name="Worsham P."/>
            <person name="Keim P.S."/>
            <person name="Salzberg S.L."/>
            <person name="Fraser-Liggett C.M."/>
            <person name="Rasko D.A."/>
        </authorList>
    </citation>
    <scope>NUCLEOTIDE SEQUENCE [LARGE SCALE GENOMIC DNA]</scope>
    <source>
        <strain>Ames ancestor</strain>
    </source>
</reference>
<reference key="3">
    <citation type="submission" date="2004-01" db="EMBL/GenBank/DDBJ databases">
        <title>Complete genome sequence of Bacillus anthracis Sterne.</title>
        <authorList>
            <person name="Brettin T.S."/>
            <person name="Bruce D."/>
            <person name="Challacombe J.F."/>
            <person name="Gilna P."/>
            <person name="Han C."/>
            <person name="Hill K."/>
            <person name="Hitchcock P."/>
            <person name="Jackson P."/>
            <person name="Keim P."/>
            <person name="Longmire J."/>
            <person name="Lucas S."/>
            <person name="Okinaka R."/>
            <person name="Richardson P."/>
            <person name="Rubin E."/>
            <person name="Tice H."/>
        </authorList>
    </citation>
    <scope>NUCLEOTIDE SEQUENCE [LARGE SCALE GENOMIC DNA]</scope>
    <source>
        <strain>Sterne</strain>
    </source>
</reference>
<organism>
    <name type="scientific">Bacillus anthracis</name>
    <dbReference type="NCBI Taxonomy" id="1392"/>
    <lineage>
        <taxon>Bacteria</taxon>
        <taxon>Bacillati</taxon>
        <taxon>Bacillota</taxon>
        <taxon>Bacilli</taxon>
        <taxon>Bacillales</taxon>
        <taxon>Bacillaceae</taxon>
        <taxon>Bacillus</taxon>
        <taxon>Bacillus cereus group</taxon>
    </lineage>
</organism>
<proteinExistence type="inferred from homology"/>
<keyword id="KW-0067">ATP-binding</keyword>
<keyword id="KW-0436">Ligase</keyword>
<keyword id="KW-0547">Nucleotide-binding</keyword>
<keyword id="KW-0554">One-carbon metabolism</keyword>
<keyword id="KW-1185">Reference proteome</keyword>
<dbReference type="EC" id="6.3.4.3" evidence="1"/>
<dbReference type="EMBL" id="AE016879">
    <property type="protein sequence ID" value="AAP25992.1"/>
    <property type="molecule type" value="Genomic_DNA"/>
</dbReference>
<dbReference type="EMBL" id="AE017334">
    <property type="protein sequence ID" value="AAT31223.1"/>
    <property type="molecule type" value="Genomic_DNA"/>
</dbReference>
<dbReference type="EMBL" id="AE017225">
    <property type="protein sequence ID" value="AAT54273.1"/>
    <property type="molecule type" value="Genomic_DNA"/>
</dbReference>
<dbReference type="RefSeq" id="NP_844506.1">
    <property type="nucleotide sequence ID" value="NC_003997.3"/>
</dbReference>
<dbReference type="RefSeq" id="WP_003159099.1">
    <property type="nucleotide sequence ID" value="NZ_WXXJ01000027.1"/>
</dbReference>
<dbReference type="RefSeq" id="YP_028222.1">
    <property type="nucleotide sequence ID" value="NC_005945.1"/>
</dbReference>
<dbReference type="SMR" id="Q81RE1"/>
<dbReference type="STRING" id="261594.GBAA_2107"/>
<dbReference type="DNASU" id="1085010"/>
<dbReference type="GeneID" id="45022019"/>
<dbReference type="KEGG" id="ban:BA_2107"/>
<dbReference type="KEGG" id="banh:HYU01_10540"/>
<dbReference type="KEGG" id="bar:GBAA_2107"/>
<dbReference type="KEGG" id="bat:BAS1959"/>
<dbReference type="PATRIC" id="fig|198094.11.peg.2080"/>
<dbReference type="eggNOG" id="COG2759">
    <property type="taxonomic scope" value="Bacteria"/>
</dbReference>
<dbReference type="HOGENOM" id="CLU_003601_3_3_9"/>
<dbReference type="OMA" id="KFWNLKC"/>
<dbReference type="OrthoDB" id="9761733at2"/>
<dbReference type="UniPathway" id="UPA00193"/>
<dbReference type="Proteomes" id="UP000000427">
    <property type="component" value="Chromosome"/>
</dbReference>
<dbReference type="Proteomes" id="UP000000594">
    <property type="component" value="Chromosome"/>
</dbReference>
<dbReference type="GO" id="GO:0005524">
    <property type="term" value="F:ATP binding"/>
    <property type="evidence" value="ECO:0007669"/>
    <property type="project" value="UniProtKB-UniRule"/>
</dbReference>
<dbReference type="GO" id="GO:0004329">
    <property type="term" value="F:formate-tetrahydrofolate ligase activity"/>
    <property type="evidence" value="ECO:0007669"/>
    <property type="project" value="UniProtKB-UniRule"/>
</dbReference>
<dbReference type="GO" id="GO:0035999">
    <property type="term" value="P:tetrahydrofolate interconversion"/>
    <property type="evidence" value="ECO:0007669"/>
    <property type="project" value="UniProtKB-UniRule"/>
</dbReference>
<dbReference type="CDD" id="cd00477">
    <property type="entry name" value="FTHFS"/>
    <property type="match status" value="1"/>
</dbReference>
<dbReference type="FunFam" id="3.30.1510.10:FF:000001">
    <property type="entry name" value="Formate--tetrahydrofolate ligase"/>
    <property type="match status" value="1"/>
</dbReference>
<dbReference type="FunFam" id="3.10.410.10:FF:000001">
    <property type="entry name" value="Putative formate--tetrahydrofolate ligase"/>
    <property type="match status" value="1"/>
</dbReference>
<dbReference type="Gene3D" id="3.30.1510.10">
    <property type="entry name" value="Domain 2, N(10)-formyltetrahydrofolate synthetase"/>
    <property type="match status" value="1"/>
</dbReference>
<dbReference type="Gene3D" id="3.10.410.10">
    <property type="entry name" value="Formyltetrahydrofolate synthetase, domain 3"/>
    <property type="match status" value="1"/>
</dbReference>
<dbReference type="Gene3D" id="3.40.50.300">
    <property type="entry name" value="P-loop containing nucleotide triphosphate hydrolases"/>
    <property type="match status" value="1"/>
</dbReference>
<dbReference type="HAMAP" id="MF_01543">
    <property type="entry name" value="FTHFS"/>
    <property type="match status" value="1"/>
</dbReference>
<dbReference type="InterPro" id="IPR000559">
    <property type="entry name" value="Formate_THF_ligase"/>
</dbReference>
<dbReference type="InterPro" id="IPR020628">
    <property type="entry name" value="Formate_THF_ligase_CS"/>
</dbReference>
<dbReference type="InterPro" id="IPR027417">
    <property type="entry name" value="P-loop_NTPase"/>
</dbReference>
<dbReference type="NCBIfam" id="NF010030">
    <property type="entry name" value="PRK13505.1"/>
    <property type="match status" value="1"/>
</dbReference>
<dbReference type="Pfam" id="PF01268">
    <property type="entry name" value="FTHFS"/>
    <property type="match status" value="1"/>
</dbReference>
<dbReference type="SUPFAM" id="SSF52540">
    <property type="entry name" value="P-loop containing nucleoside triphosphate hydrolases"/>
    <property type="match status" value="1"/>
</dbReference>
<dbReference type="PROSITE" id="PS00721">
    <property type="entry name" value="FTHFS_1"/>
    <property type="match status" value="1"/>
</dbReference>
<dbReference type="PROSITE" id="PS00722">
    <property type="entry name" value="FTHFS_2"/>
    <property type="match status" value="1"/>
</dbReference>
<accession>Q81RE1</accession>
<accession>Q6HZL6</accession>
<accession>Q6KTK5</accession>
<sequence length="562" mass="60489">MTTTTTVKSDIEIAQEANMKKIQEIAADLNILEDELEPYGHYKGKLSLDIFKRLQNEKDGKVVLVTAINPTPAGEGKSTVTVGLGQAFNKIGKKTVIALREPSLGPTMGLKGGAAGGGFSQVVPMEDINLHFTGDIHAITTANNALAAFIDNHIQQGNTLGIDTRKIVWKRCVDLNDRALRNVVIGLGGPVQGVPREDGFDITVASEIMAVFCLATDIQDLKARLSRIVVAYNFANQPVTVKDLGVEGALTLLLKDALKPNLVQTLENTPAIIHGGPFANIAHGCNSVIATTMAAKLGDYVITEAGFGADLGAEKFLDIKARAAGIKPEAVVIVATIRALKMHGGVAKDQLKEENVDALAKGMENLQKHVETIQSFGVPFVIAINKFITDTDAEVAYLQEWCNERGYAVSLTEVWEKGGQGGVDLAEKVLKEIEKGENNYAPLYELELPLEEKIRTIAQKVYGAKDIEFAPKARKQLAQYEGEGWSNLPICMAKTQYSLSDDATKLGRPSDFIVTIRELKPSIGAGFIVALTGTMLTMPGLPKQPAALQMDVNEDGKAVGLF</sequence>
<comment type="catalytic activity">
    <reaction evidence="1">
        <text>(6S)-5,6,7,8-tetrahydrofolate + formate + ATP = (6R)-10-formyltetrahydrofolate + ADP + phosphate</text>
        <dbReference type="Rhea" id="RHEA:20221"/>
        <dbReference type="ChEBI" id="CHEBI:15740"/>
        <dbReference type="ChEBI" id="CHEBI:30616"/>
        <dbReference type="ChEBI" id="CHEBI:43474"/>
        <dbReference type="ChEBI" id="CHEBI:57453"/>
        <dbReference type="ChEBI" id="CHEBI:195366"/>
        <dbReference type="ChEBI" id="CHEBI:456216"/>
        <dbReference type="EC" id="6.3.4.3"/>
    </reaction>
</comment>
<comment type="pathway">
    <text evidence="1">One-carbon metabolism; tetrahydrofolate interconversion.</text>
</comment>
<comment type="similarity">
    <text evidence="1">Belongs to the formate--tetrahydrofolate ligase family.</text>
</comment>
<evidence type="ECO:0000255" key="1">
    <source>
        <dbReference type="HAMAP-Rule" id="MF_01543"/>
    </source>
</evidence>
<protein>
    <recommendedName>
        <fullName evidence="1">Formate--tetrahydrofolate ligase</fullName>
        <ecNumber evidence="1">6.3.4.3</ecNumber>
    </recommendedName>
    <alternativeName>
        <fullName evidence="1">Formyltetrahydrofolate synthetase</fullName>
        <shortName evidence="1">FHS</shortName>
        <shortName evidence="1">FTHFS</shortName>
    </alternativeName>
</protein>
<name>FTHS_BACAN</name>